<gene>
    <name evidence="1" type="primary">ruvB</name>
    <name type="ordered locus">BceJ2315_32780</name>
    <name type="ORF">BCAL3339</name>
</gene>
<accession>B4EES7</accession>
<sequence length="356" mass="39530">MIETDKLATEQRIIAATPASSHEEVFERALRPRQLDDYVGQEKVRGQLEIFIEAAKRRSEPLDHVLLFGPPGLGKTTLAHIIAREMGVNLRQTSGPVLERAGDLAALLTNLEANDVLFIDEIHRLSPVVEEILYPALEDYQIDIMIGEGPAARSVKLDLQPFTLVGATTRAGMLTNPLRDRFGIVARLEFYDADQLSRIVRRSASLLNAQIDPNGALEIAKRSRGTPRIANRLLRRVRDFAEVKADGQITAAVADAALAMLDVDPVGFDLMDRKLLEAILYKFDGGPVGIDNLAAAIGEERDTIEDVLEPYLIQQGFLQRTPRGRVATLLTYRHFGLSVPDARRPERDEWDTPDGK</sequence>
<dbReference type="EC" id="3.6.4.-" evidence="1"/>
<dbReference type="EMBL" id="AM747720">
    <property type="protein sequence ID" value="CAR53662.1"/>
    <property type="molecule type" value="Genomic_DNA"/>
</dbReference>
<dbReference type="RefSeq" id="WP_006483430.1">
    <property type="nucleotide sequence ID" value="NC_011000.1"/>
</dbReference>
<dbReference type="SMR" id="B4EES7"/>
<dbReference type="GeneID" id="62010072"/>
<dbReference type="KEGG" id="bcj:BCAL3339"/>
<dbReference type="eggNOG" id="COG2255">
    <property type="taxonomic scope" value="Bacteria"/>
</dbReference>
<dbReference type="HOGENOM" id="CLU_055599_1_0_4"/>
<dbReference type="BioCyc" id="BCEN216591:G1G1V-3715-MONOMER"/>
<dbReference type="Proteomes" id="UP000001035">
    <property type="component" value="Chromosome 1"/>
</dbReference>
<dbReference type="GO" id="GO:0005737">
    <property type="term" value="C:cytoplasm"/>
    <property type="evidence" value="ECO:0007669"/>
    <property type="project" value="UniProtKB-SubCell"/>
</dbReference>
<dbReference type="GO" id="GO:0048476">
    <property type="term" value="C:Holliday junction resolvase complex"/>
    <property type="evidence" value="ECO:0007669"/>
    <property type="project" value="UniProtKB-UniRule"/>
</dbReference>
<dbReference type="GO" id="GO:0005524">
    <property type="term" value="F:ATP binding"/>
    <property type="evidence" value="ECO:0007669"/>
    <property type="project" value="UniProtKB-UniRule"/>
</dbReference>
<dbReference type="GO" id="GO:0016887">
    <property type="term" value="F:ATP hydrolysis activity"/>
    <property type="evidence" value="ECO:0007669"/>
    <property type="project" value="InterPro"/>
</dbReference>
<dbReference type="GO" id="GO:0000400">
    <property type="term" value="F:four-way junction DNA binding"/>
    <property type="evidence" value="ECO:0007669"/>
    <property type="project" value="UniProtKB-UniRule"/>
</dbReference>
<dbReference type="GO" id="GO:0009378">
    <property type="term" value="F:four-way junction helicase activity"/>
    <property type="evidence" value="ECO:0007669"/>
    <property type="project" value="InterPro"/>
</dbReference>
<dbReference type="GO" id="GO:0006310">
    <property type="term" value="P:DNA recombination"/>
    <property type="evidence" value="ECO:0007669"/>
    <property type="project" value="UniProtKB-UniRule"/>
</dbReference>
<dbReference type="GO" id="GO:0006281">
    <property type="term" value="P:DNA repair"/>
    <property type="evidence" value="ECO:0007669"/>
    <property type="project" value="UniProtKB-UniRule"/>
</dbReference>
<dbReference type="CDD" id="cd00009">
    <property type="entry name" value="AAA"/>
    <property type="match status" value="1"/>
</dbReference>
<dbReference type="FunFam" id="1.10.10.10:FF:000086">
    <property type="entry name" value="Holliday junction ATP-dependent DNA helicase RuvB"/>
    <property type="match status" value="1"/>
</dbReference>
<dbReference type="FunFam" id="1.10.8.60:FF:000023">
    <property type="entry name" value="Holliday junction ATP-dependent DNA helicase RuvB"/>
    <property type="match status" value="1"/>
</dbReference>
<dbReference type="FunFam" id="3.40.50.300:FF:000073">
    <property type="entry name" value="Holliday junction ATP-dependent DNA helicase RuvB"/>
    <property type="match status" value="1"/>
</dbReference>
<dbReference type="Gene3D" id="1.10.8.60">
    <property type="match status" value="1"/>
</dbReference>
<dbReference type="Gene3D" id="3.40.50.300">
    <property type="entry name" value="P-loop containing nucleotide triphosphate hydrolases"/>
    <property type="match status" value="1"/>
</dbReference>
<dbReference type="Gene3D" id="1.10.10.10">
    <property type="entry name" value="Winged helix-like DNA-binding domain superfamily/Winged helix DNA-binding domain"/>
    <property type="match status" value="1"/>
</dbReference>
<dbReference type="HAMAP" id="MF_00016">
    <property type="entry name" value="DNA_HJ_migration_RuvB"/>
    <property type="match status" value="1"/>
</dbReference>
<dbReference type="InterPro" id="IPR003593">
    <property type="entry name" value="AAA+_ATPase"/>
</dbReference>
<dbReference type="InterPro" id="IPR041445">
    <property type="entry name" value="AAA_lid_4"/>
</dbReference>
<dbReference type="InterPro" id="IPR004605">
    <property type="entry name" value="DNA_helicase_Holl-junc_RuvB"/>
</dbReference>
<dbReference type="InterPro" id="IPR027417">
    <property type="entry name" value="P-loop_NTPase"/>
</dbReference>
<dbReference type="InterPro" id="IPR008824">
    <property type="entry name" value="RuvB-like_N"/>
</dbReference>
<dbReference type="InterPro" id="IPR008823">
    <property type="entry name" value="RuvB_C"/>
</dbReference>
<dbReference type="InterPro" id="IPR036388">
    <property type="entry name" value="WH-like_DNA-bd_sf"/>
</dbReference>
<dbReference type="InterPro" id="IPR036390">
    <property type="entry name" value="WH_DNA-bd_sf"/>
</dbReference>
<dbReference type="NCBIfam" id="NF000868">
    <property type="entry name" value="PRK00080.1"/>
    <property type="match status" value="1"/>
</dbReference>
<dbReference type="NCBIfam" id="TIGR00635">
    <property type="entry name" value="ruvB"/>
    <property type="match status" value="1"/>
</dbReference>
<dbReference type="PANTHER" id="PTHR42848">
    <property type="match status" value="1"/>
</dbReference>
<dbReference type="PANTHER" id="PTHR42848:SF1">
    <property type="entry name" value="HOLLIDAY JUNCTION BRANCH MIGRATION COMPLEX SUBUNIT RUVB"/>
    <property type="match status" value="1"/>
</dbReference>
<dbReference type="Pfam" id="PF17864">
    <property type="entry name" value="AAA_lid_4"/>
    <property type="match status" value="1"/>
</dbReference>
<dbReference type="Pfam" id="PF05491">
    <property type="entry name" value="RuvB_C"/>
    <property type="match status" value="1"/>
</dbReference>
<dbReference type="Pfam" id="PF05496">
    <property type="entry name" value="RuvB_N"/>
    <property type="match status" value="1"/>
</dbReference>
<dbReference type="SMART" id="SM00382">
    <property type="entry name" value="AAA"/>
    <property type="match status" value="1"/>
</dbReference>
<dbReference type="SUPFAM" id="SSF52540">
    <property type="entry name" value="P-loop containing nucleoside triphosphate hydrolases"/>
    <property type="match status" value="1"/>
</dbReference>
<dbReference type="SUPFAM" id="SSF46785">
    <property type="entry name" value="Winged helix' DNA-binding domain"/>
    <property type="match status" value="1"/>
</dbReference>
<proteinExistence type="inferred from homology"/>
<keyword id="KW-0067">ATP-binding</keyword>
<keyword id="KW-0963">Cytoplasm</keyword>
<keyword id="KW-0227">DNA damage</keyword>
<keyword id="KW-0233">DNA recombination</keyword>
<keyword id="KW-0234">DNA repair</keyword>
<keyword id="KW-0238">DNA-binding</keyword>
<keyword id="KW-0378">Hydrolase</keyword>
<keyword id="KW-0547">Nucleotide-binding</keyword>
<name>RUVB_BURCJ</name>
<evidence type="ECO:0000255" key="1">
    <source>
        <dbReference type="HAMAP-Rule" id="MF_00016"/>
    </source>
</evidence>
<reference key="1">
    <citation type="journal article" date="2009" name="J. Bacteriol.">
        <title>The genome of Burkholderia cenocepacia J2315, an epidemic pathogen of cystic fibrosis patients.</title>
        <authorList>
            <person name="Holden M.T."/>
            <person name="Seth-Smith H.M."/>
            <person name="Crossman L.C."/>
            <person name="Sebaihia M."/>
            <person name="Bentley S.D."/>
            <person name="Cerdeno-Tarraga A.M."/>
            <person name="Thomson N.R."/>
            <person name="Bason N."/>
            <person name="Quail M.A."/>
            <person name="Sharp S."/>
            <person name="Cherevach I."/>
            <person name="Churcher C."/>
            <person name="Goodhead I."/>
            <person name="Hauser H."/>
            <person name="Holroyd N."/>
            <person name="Mungall K."/>
            <person name="Scott P."/>
            <person name="Walker D."/>
            <person name="White B."/>
            <person name="Rose H."/>
            <person name="Iversen P."/>
            <person name="Mil-Homens D."/>
            <person name="Rocha E.P."/>
            <person name="Fialho A.M."/>
            <person name="Baldwin A."/>
            <person name="Dowson C."/>
            <person name="Barrell B.G."/>
            <person name="Govan J.R."/>
            <person name="Vandamme P."/>
            <person name="Hart C.A."/>
            <person name="Mahenthiralingam E."/>
            <person name="Parkhill J."/>
        </authorList>
    </citation>
    <scope>NUCLEOTIDE SEQUENCE [LARGE SCALE GENOMIC DNA]</scope>
    <source>
        <strain>ATCC BAA-245 / DSM 16553 / LMG 16656 / NCTC 13227 / J2315 / CF5610</strain>
    </source>
</reference>
<protein>
    <recommendedName>
        <fullName evidence="1">Holliday junction branch migration complex subunit RuvB</fullName>
        <ecNumber evidence="1">3.6.4.-</ecNumber>
    </recommendedName>
</protein>
<feature type="chain" id="PRO_1000089623" description="Holliday junction branch migration complex subunit RuvB">
    <location>
        <begin position="1"/>
        <end position="356"/>
    </location>
</feature>
<feature type="region of interest" description="Large ATPase domain (RuvB-L)" evidence="1">
    <location>
        <begin position="4"/>
        <end position="191"/>
    </location>
</feature>
<feature type="region of interest" description="Small ATPAse domain (RuvB-S)" evidence="1">
    <location>
        <begin position="192"/>
        <end position="262"/>
    </location>
</feature>
<feature type="region of interest" description="Head domain (RuvB-H)" evidence="1">
    <location>
        <begin position="265"/>
        <end position="356"/>
    </location>
</feature>
<feature type="binding site" evidence="1">
    <location>
        <position position="30"/>
    </location>
    <ligand>
        <name>ATP</name>
        <dbReference type="ChEBI" id="CHEBI:30616"/>
    </ligand>
</feature>
<feature type="binding site" evidence="1">
    <location>
        <position position="31"/>
    </location>
    <ligand>
        <name>ATP</name>
        <dbReference type="ChEBI" id="CHEBI:30616"/>
    </ligand>
</feature>
<feature type="binding site" evidence="1">
    <location>
        <position position="72"/>
    </location>
    <ligand>
        <name>ATP</name>
        <dbReference type="ChEBI" id="CHEBI:30616"/>
    </ligand>
</feature>
<feature type="binding site" evidence="1">
    <location>
        <position position="75"/>
    </location>
    <ligand>
        <name>ATP</name>
        <dbReference type="ChEBI" id="CHEBI:30616"/>
    </ligand>
</feature>
<feature type="binding site" evidence="1">
    <location>
        <position position="76"/>
    </location>
    <ligand>
        <name>ATP</name>
        <dbReference type="ChEBI" id="CHEBI:30616"/>
    </ligand>
</feature>
<feature type="binding site" evidence="1">
    <location>
        <position position="76"/>
    </location>
    <ligand>
        <name>Mg(2+)</name>
        <dbReference type="ChEBI" id="CHEBI:18420"/>
    </ligand>
</feature>
<feature type="binding site" evidence="1">
    <location>
        <position position="77"/>
    </location>
    <ligand>
        <name>ATP</name>
        <dbReference type="ChEBI" id="CHEBI:30616"/>
    </ligand>
</feature>
<feature type="binding site" evidence="1">
    <location>
        <begin position="138"/>
        <end position="140"/>
    </location>
    <ligand>
        <name>ATP</name>
        <dbReference type="ChEBI" id="CHEBI:30616"/>
    </ligand>
</feature>
<feature type="binding site" evidence="1">
    <location>
        <position position="181"/>
    </location>
    <ligand>
        <name>ATP</name>
        <dbReference type="ChEBI" id="CHEBI:30616"/>
    </ligand>
</feature>
<feature type="binding site" evidence="1">
    <location>
        <position position="191"/>
    </location>
    <ligand>
        <name>ATP</name>
        <dbReference type="ChEBI" id="CHEBI:30616"/>
    </ligand>
</feature>
<feature type="binding site" evidence="1">
    <location>
        <position position="228"/>
    </location>
    <ligand>
        <name>ATP</name>
        <dbReference type="ChEBI" id="CHEBI:30616"/>
    </ligand>
</feature>
<feature type="binding site" evidence="1">
    <location>
        <position position="301"/>
    </location>
    <ligand>
        <name>DNA</name>
        <dbReference type="ChEBI" id="CHEBI:16991"/>
    </ligand>
</feature>
<feature type="binding site" evidence="1">
    <location>
        <position position="320"/>
    </location>
    <ligand>
        <name>DNA</name>
        <dbReference type="ChEBI" id="CHEBI:16991"/>
    </ligand>
</feature>
<feature type="binding site" evidence="1">
    <location>
        <position position="325"/>
    </location>
    <ligand>
        <name>DNA</name>
        <dbReference type="ChEBI" id="CHEBI:16991"/>
    </ligand>
</feature>
<organism>
    <name type="scientific">Burkholderia cenocepacia (strain ATCC BAA-245 / DSM 16553 / LMG 16656 / NCTC 13227 / J2315 / CF5610)</name>
    <name type="common">Burkholderia cepacia (strain J2315)</name>
    <dbReference type="NCBI Taxonomy" id="216591"/>
    <lineage>
        <taxon>Bacteria</taxon>
        <taxon>Pseudomonadati</taxon>
        <taxon>Pseudomonadota</taxon>
        <taxon>Betaproteobacteria</taxon>
        <taxon>Burkholderiales</taxon>
        <taxon>Burkholderiaceae</taxon>
        <taxon>Burkholderia</taxon>
        <taxon>Burkholderia cepacia complex</taxon>
    </lineage>
</organism>
<comment type="function">
    <text evidence="1">The RuvA-RuvB-RuvC complex processes Holliday junction (HJ) DNA during genetic recombination and DNA repair, while the RuvA-RuvB complex plays an important role in the rescue of blocked DNA replication forks via replication fork reversal (RFR). RuvA specifically binds to HJ cruciform DNA, conferring on it an open structure. The RuvB hexamer acts as an ATP-dependent pump, pulling dsDNA into and through the RuvAB complex. RuvB forms 2 homohexamers on either side of HJ DNA bound by 1 or 2 RuvA tetramers; 4 subunits per hexamer contact DNA at a time. Coordinated motions by a converter formed by DNA-disengaged RuvB subunits stimulates ATP hydrolysis and nucleotide exchange. Immobilization of the converter enables RuvB to convert the ATP-contained energy into a lever motion, pulling 2 nucleotides of DNA out of the RuvA tetramer per ATP hydrolyzed, thus driving DNA branch migration. The RuvB motors rotate together with the DNA substrate, which together with the progressing nucleotide cycle form the mechanistic basis for DNA recombination by continuous HJ branch migration. Branch migration allows RuvC to scan DNA until it finds its consensus sequence, where it cleaves and resolves cruciform DNA.</text>
</comment>
<comment type="catalytic activity">
    <reaction evidence="1">
        <text>ATP + H2O = ADP + phosphate + H(+)</text>
        <dbReference type="Rhea" id="RHEA:13065"/>
        <dbReference type="ChEBI" id="CHEBI:15377"/>
        <dbReference type="ChEBI" id="CHEBI:15378"/>
        <dbReference type="ChEBI" id="CHEBI:30616"/>
        <dbReference type="ChEBI" id="CHEBI:43474"/>
        <dbReference type="ChEBI" id="CHEBI:456216"/>
    </reaction>
</comment>
<comment type="subunit">
    <text evidence="1">Homohexamer. Forms an RuvA(8)-RuvB(12)-Holliday junction (HJ) complex. HJ DNA is sandwiched between 2 RuvA tetramers; dsDNA enters through RuvA and exits via RuvB. An RuvB hexamer assembles on each DNA strand where it exits the tetramer. Each RuvB hexamer is contacted by two RuvA subunits (via domain III) on 2 adjacent RuvB subunits; this complex drives branch migration. In the full resolvosome a probable DNA-RuvA(4)-RuvB(12)-RuvC(2) complex forms which resolves the HJ.</text>
</comment>
<comment type="subcellular location">
    <subcellularLocation>
        <location evidence="1">Cytoplasm</location>
    </subcellularLocation>
</comment>
<comment type="domain">
    <text evidence="1">Has 3 domains, the large (RuvB-L) and small ATPase (RuvB-S) domains and the C-terminal head (RuvB-H) domain. The head domain binds DNA, while the ATPase domains jointly bind ATP, ADP or are empty depending on the state of the subunit in the translocation cycle. During a single DNA translocation step the structure of each domain remains the same, but their relative positions change.</text>
</comment>
<comment type="similarity">
    <text evidence="1">Belongs to the RuvB family.</text>
</comment>